<organism>
    <name type="scientific">Cochliobolus carbonum (strain 26-R-13)</name>
    <name type="common">Maize leaf spot fungus</name>
    <name type="synonym">Bipolaris zeicola</name>
    <dbReference type="NCBI Taxonomy" id="930089"/>
    <lineage>
        <taxon>Eukaryota</taxon>
        <taxon>Fungi</taxon>
        <taxon>Dikarya</taxon>
        <taxon>Ascomycota</taxon>
        <taxon>Pezizomycotina</taxon>
        <taxon>Dothideomycetes</taxon>
        <taxon>Pleosporomycetidae</taxon>
        <taxon>Pleosporales</taxon>
        <taxon>Pleosporineae</taxon>
        <taxon>Pleosporaceae</taxon>
        <taxon>Bipolaris</taxon>
    </lineage>
</organism>
<keyword id="KW-1015">Disulfide bond</keyword>
<keyword id="KW-0325">Glycoprotein</keyword>
<keyword id="KW-0378">Hydrolase</keyword>
<keyword id="KW-1185">Reference proteome</keyword>
<keyword id="KW-0964">Secreted</keyword>
<keyword id="KW-0732">Signal</keyword>
<keyword id="KW-0843">Virulence</keyword>
<name>PGH_COCC2</name>
<sequence length="644" mass="70752">MYTSRSLFSTLASCLSLATLVASSPTTNQNLPSSKRDATVEQNVFFDINGKEVETRIAKLKAEGYRPTSLNIHGTPTDAKYAGIWIKQDGNPYETIVGANKTTYDAWLDQWKASGYVSTQVSATGPASNAVFAGVMEKIPSIRNWTQICGTSSPYAYLNATGDAPIVITGVSLYGTPTERQYCVLGHEDTDNHQQTVWFPTSSSQDYKTIEPAETTKRFWRPVFIDSSEDKLLASIFDDTSVGNWTVRTDLTASQLQSEITAQKANNMHPIHISGAGSTETQYVVIFTEQATPLERNWHAVGDITGFPDNARVKRDLDEILQKFMKRNSVRQAQVSASINGTVIASRAYTWAESNRAIVEPSDKFLLGSVSKAFTYAAVDHLVSTGVVNLTDHIYPLLGYTKPADPRSLNITIQHLLDHTGGFDRGMSPDIGFIFTTVAQSLNQSTPATLRQLIEYVLAKPLDFEPGTRSVYSNYGTLLLGYLIANKTGETYMSYLEKNVLKGLDVEMYTTPGADHTNDRIVQETKFTSISALTPLSEKRVANVYGGDGAVKEAAVSSFALKASADTVSRFIGKHAAYGLGPRQLFMYRDGTVAGARALAYSMAKLDWAITLNTREYLDENAWNTLVFTDLYQLWGALDSALPL</sequence>
<gene>
    <name evidence="14" type="ORF">COCCADRAFT_88813</name>
</gene>
<feature type="signal peptide" evidence="3">
    <location>
        <begin position="1"/>
        <end position="23"/>
    </location>
</feature>
<feature type="chain" id="PRO_5004885960" description="Polyglycine hydrolase" evidence="3">
    <location>
        <begin position="24"/>
        <end position="644"/>
    </location>
</feature>
<feature type="active site" evidence="1">
    <location>
        <position position="369"/>
    </location>
</feature>
<feature type="glycosylation site" description="N-linked (GlcNAc...) asparagine" evidence="4">
    <location>
        <position position="100"/>
    </location>
</feature>
<feature type="glycosylation site" description="N-linked (GlcNAc...) asparagine" evidence="4">
    <location>
        <position position="144"/>
    </location>
</feature>
<feature type="glycosylation site" description="N-linked (GlcNAc...) asparagine" evidence="4">
    <location>
        <position position="159"/>
    </location>
</feature>
<feature type="glycosylation site" description="N-linked (GlcNAc...) asparagine" evidence="4">
    <location>
        <position position="244"/>
    </location>
</feature>
<feature type="glycosylation site" description="N-linked (GlcNAc...) asparagine" evidence="4">
    <location>
        <position position="340"/>
    </location>
</feature>
<feature type="glycosylation site" description="N-linked (GlcNAc...) asparagine" evidence="4">
    <location>
        <position position="389"/>
    </location>
</feature>
<feature type="glycosylation site" description="N-linked (GlcNAc...) asparagine" evidence="4">
    <location>
        <position position="410"/>
    </location>
</feature>
<feature type="glycosylation site" description="N-linked (GlcNAc...) asparagine" evidence="4">
    <location>
        <position position="443"/>
    </location>
</feature>
<feature type="glycosylation site" description="N-linked (GlcNAc...) asparagine" evidence="4">
    <location>
        <position position="486"/>
    </location>
</feature>
<feature type="disulfide bond" evidence="2">
    <location>
        <begin position="149"/>
        <end position="183"/>
    </location>
</feature>
<evidence type="ECO:0000250" key="1">
    <source>
        <dbReference type="UniProtKB" id="A0A0A7LRQ7"/>
    </source>
</evidence>
<evidence type="ECO:0000250" key="2">
    <source>
        <dbReference type="UniProtKB" id="C7YS44"/>
    </source>
</evidence>
<evidence type="ECO:0000255" key="3"/>
<evidence type="ECO:0000255" key="4">
    <source>
        <dbReference type="PROSITE-ProRule" id="PRU00498"/>
    </source>
</evidence>
<evidence type="ECO:0000269" key="5">
    <source>
    </source>
</evidence>
<evidence type="ECO:0000269" key="6">
    <source>
    </source>
</evidence>
<evidence type="ECO:0000269" key="7">
    <source>
    </source>
</evidence>
<evidence type="ECO:0000269" key="8">
    <source>
    </source>
</evidence>
<evidence type="ECO:0000269" key="9">
    <source ref="2"/>
</evidence>
<evidence type="ECO:0000303" key="10">
    <source>
    </source>
</evidence>
<evidence type="ECO:0000303" key="11">
    <source>
    </source>
</evidence>
<evidence type="ECO:0000303" key="12">
    <source ref="2"/>
</evidence>
<evidence type="ECO:0000305" key="13"/>
<evidence type="ECO:0000312" key="14">
    <source>
        <dbReference type="EMBL" id="EUC36254.1"/>
    </source>
</evidence>
<evidence type="ECO:0000312" key="15">
    <source>
        <dbReference type="Proteomes" id="UP000053841"/>
    </source>
</evidence>
<comment type="function">
    <text evidence="5 6 7 8 9">Serine-type endopeptidase that cleaves Gly-Gly bonds in the polyglycine linker of host plant class IV chitinases to disrupt their chitin-binding, and thereby plays a role in lowering the defense responses of the host to the fungus (PubMed:21453431, PubMed:24627966, PubMed:25966977, PubMed:36762862, Ref.2). Degrades Z.mays Endochitinase A (CHIA) (PubMed:21453431, PubMed:24627966, PubMed:25966977, PubMed:36762862, Ref.2). Has low proteolytic activity on Z.mays Endochitinase B (CHIB) (PubMed:24627966, PubMed:25966977).</text>
</comment>
<comment type="catalytic activity">
    <reaction evidence="5 6 7 8 9">
        <text>a glycyl-glycyl-[protein] + H2O = N-terminal glycyl-[protein] + [protein]-C-terminal glycine</text>
        <dbReference type="Rhea" id="RHEA:76243"/>
        <dbReference type="Rhea" id="RHEA-COMP:12666"/>
        <dbReference type="Rhea" id="RHEA-COMP:15093"/>
        <dbReference type="Rhea" id="RHEA-COMP:18656"/>
        <dbReference type="ChEBI" id="CHEBI:15377"/>
        <dbReference type="ChEBI" id="CHEBI:64723"/>
        <dbReference type="ChEBI" id="CHEBI:83148"/>
        <dbReference type="ChEBI" id="CHEBI:195192"/>
    </reaction>
</comment>
<comment type="activity regulation">
    <text evidence="7">Not inhibited by phenylmethylsulfonyl fluoride (PMSF; serine peptidase class S1 inhibitor), clavulanic acid (beta-lactamase inhibitor) or ampicillin (penicillin-binding protein (PBP) inhibitor).</text>
</comment>
<comment type="subcellular location">
    <subcellularLocation>
        <location evidence="5 6 7 8 9">Secreted</location>
    </subcellularLocation>
</comment>
<comment type="similarity">
    <text evidence="13">Belongs to the peptidase S12 family.</text>
</comment>
<accession>W6YKT9</accession>
<dbReference type="EC" id="3.4.21.-" evidence="5 6 7 8 9"/>
<dbReference type="EMBL" id="KI964564">
    <property type="protein sequence ID" value="EUC36254.1"/>
    <property type="molecule type" value="Genomic_DNA"/>
</dbReference>
<dbReference type="RefSeq" id="XP_007709513.1">
    <property type="nucleotide sequence ID" value="XM_007711323.1"/>
</dbReference>
<dbReference type="SMR" id="W6YKT9"/>
<dbReference type="GeneID" id="19152648"/>
<dbReference type="KEGG" id="bze:COCCADRAFT_88813"/>
<dbReference type="eggNOG" id="ENOG502S73P">
    <property type="taxonomic scope" value="Eukaryota"/>
</dbReference>
<dbReference type="HOGENOM" id="CLU_027352_0_0_1"/>
<dbReference type="OrthoDB" id="5946976at2759"/>
<dbReference type="Proteomes" id="UP000053841">
    <property type="component" value="Unassembled WGS sequence"/>
</dbReference>
<dbReference type="GO" id="GO:0005576">
    <property type="term" value="C:extracellular region"/>
    <property type="evidence" value="ECO:0000314"/>
    <property type="project" value="UniProtKB"/>
</dbReference>
<dbReference type="GO" id="GO:0004252">
    <property type="term" value="F:serine-type endopeptidase activity"/>
    <property type="evidence" value="ECO:0000314"/>
    <property type="project" value="UniProtKB"/>
</dbReference>
<dbReference type="GO" id="GO:0140590">
    <property type="term" value="P:effector-mediated suppression of host defense response"/>
    <property type="evidence" value="ECO:0000314"/>
    <property type="project" value="UniProtKB"/>
</dbReference>
<dbReference type="Gene3D" id="3.40.710.10">
    <property type="entry name" value="DD-peptidase/beta-lactamase superfamily"/>
    <property type="match status" value="1"/>
</dbReference>
<dbReference type="InterPro" id="IPR050491">
    <property type="entry name" value="Bact_CellWall_Synth/Modif"/>
</dbReference>
<dbReference type="InterPro" id="IPR001466">
    <property type="entry name" value="Beta-lactam-related"/>
</dbReference>
<dbReference type="InterPro" id="IPR012338">
    <property type="entry name" value="Beta-lactam/transpept-like"/>
</dbReference>
<dbReference type="InterPro" id="IPR049511">
    <property type="entry name" value="PGH-like_rpt"/>
</dbReference>
<dbReference type="PANTHER" id="PTHR46825:SF9">
    <property type="entry name" value="BETA-LACTAMASE-RELATED DOMAIN-CONTAINING PROTEIN"/>
    <property type="match status" value="1"/>
</dbReference>
<dbReference type="PANTHER" id="PTHR46825">
    <property type="entry name" value="D-ALANYL-D-ALANINE-CARBOXYPEPTIDASE/ENDOPEPTIDASE AMPH"/>
    <property type="match status" value="1"/>
</dbReference>
<dbReference type="Pfam" id="PF00144">
    <property type="entry name" value="Beta-lactamase"/>
    <property type="match status" value="1"/>
</dbReference>
<dbReference type="Pfam" id="PF17660">
    <property type="entry name" value="BTRD1"/>
    <property type="match status" value="3"/>
</dbReference>
<dbReference type="SUPFAM" id="SSF56601">
    <property type="entry name" value="beta-lactamase/transpeptidase-like"/>
    <property type="match status" value="1"/>
</dbReference>
<reference evidence="15" key="1">
    <citation type="journal article" date="2013" name="PLoS Genet.">
        <title>Comparative genome structure, secondary metabolite, and effector coding capacity across Cochliobolus pathogens.</title>
        <authorList>
            <person name="Condon B.J."/>
            <person name="Leng Y."/>
            <person name="Wu D."/>
            <person name="Bushley K.E."/>
            <person name="Ohm R.A."/>
            <person name="Otillar R."/>
            <person name="Martin J."/>
            <person name="Schackwitz W."/>
            <person name="Grimwood J."/>
            <person name="MohdZainudin N."/>
            <person name="Xue C."/>
            <person name="Wang R."/>
            <person name="Manning V.A."/>
            <person name="Dhillon B."/>
            <person name="Tu Z.J."/>
            <person name="Steffenson B.J."/>
            <person name="Salamov A."/>
            <person name="Sun H."/>
            <person name="Lowry S."/>
            <person name="LaButti K."/>
            <person name="Han J."/>
            <person name="Copeland A."/>
            <person name="Lindquist E."/>
            <person name="Barry K."/>
            <person name="Schmutz J."/>
            <person name="Baker S.E."/>
            <person name="Ciuffetti L.M."/>
            <person name="Grigoriev I.V."/>
            <person name="Zhong S."/>
            <person name="Turgeon B.G."/>
        </authorList>
    </citation>
    <scope>NUCLEOTIDE SEQUENCE [LARGE SCALE GENOMIC DNA]</scope>
    <source>
        <strain evidence="15">26-R-13</strain>
    </source>
</reference>
<reference evidence="13" key="2">
    <citation type="journal article" date="2009" name="Physiol. Mol. Plant Pathol.">
        <title>Maize seed chitinase is modified by a protein secreted by Bipolaris zeicola.</title>
        <authorList>
            <person name="Naumann T.A."/>
            <person name="Wickman D.T."/>
            <person name="Kendra D.F."/>
        </authorList>
    </citation>
    <scope>FUNCTION</scope>
    <scope>CATALYTIC ACTIVITY</scope>
    <scope>SUBCELLULAR LOCATION</scope>
</reference>
<reference evidence="13" key="3">
    <citation type="journal article" date="2011" name="Mol. Plant Pathol.">
        <title>Modification of recombinant maize ChitA chitinase by fungal chitinase-modifying proteins.</title>
        <authorList>
            <person name="Naumann T.A."/>
        </authorList>
    </citation>
    <scope>FUNCTION</scope>
    <scope>CATALYTIC ACTIVITY</scope>
    <scope>SUBCELLULAR LOCATION</scope>
</reference>
<reference evidence="13" key="4">
    <citation type="journal article" date="2014" name="Biochem. J.">
        <title>Polyglycine hydrolases secreted by Pleosporineae fungi that target the linker region of plant class IV chitinases.</title>
        <authorList>
            <person name="Naumann T.A."/>
            <person name="Wicklow D.T."/>
            <person name="Price N.P."/>
        </authorList>
    </citation>
    <scope>FUNCTION</scope>
    <scope>CATALYTIC ACTIVITY</scope>
    <scope>SUBCELLULAR LOCATION</scope>
</reference>
<reference evidence="13" key="5">
    <citation type="journal article" date="2015" name="Protein Sci.">
        <title>Polyglycine hydrolases: Fungal beta-lactamase-like endoproteases that cleave polyglycine regions within plant class IV chitinases.</title>
        <authorList>
            <person name="Naumann T.A."/>
            <person name="Naldrett M.J."/>
            <person name="Ward T.J."/>
            <person name="Price N.P."/>
        </authorList>
    </citation>
    <scope>FUNCTION</scope>
    <scope>CATALYTIC ACTIVITY</scope>
    <scope>ACTIVITY REGULATION</scope>
    <scope>SUBCELLULAR LOCATION</scope>
    <source>
        <strain evidence="11">NRRL 54204</strain>
    </source>
</reference>
<reference evidence="13" key="6">
    <citation type="journal article" date="2023" name="Acta Crystallogr. D Struct. Biol.">
        <title>Crystal structure of a polyglycine hydrolase determined using a RoseTTAFold model.</title>
        <authorList>
            <person name="Dowling N.V."/>
            <person name="Naumann T.A."/>
            <person name="Price N.P.J."/>
            <person name="Rose D.R."/>
        </authorList>
    </citation>
    <scope>FUNCTION</scope>
    <scope>CATALYTIC ACTIVITY</scope>
    <scope>SUBCELLULAR LOCATION</scope>
</reference>
<protein>
    <recommendedName>
        <fullName evidence="10">Polyglycine hydrolase</fullName>
        <ecNumber evidence="5 6 7 8 9">3.4.21.-</ecNumber>
    </recommendedName>
    <alternativeName>
        <fullName>Chitinase modifying protein</fullName>
        <shortName evidence="12">BzCMP</shortName>
    </alternativeName>
</protein>
<proteinExistence type="evidence at protein level"/>